<accession>Q2GH35</accession>
<reference key="1">
    <citation type="journal article" date="2006" name="PLoS Genet.">
        <title>Comparative genomics of emerging human ehrlichiosis agents.</title>
        <authorList>
            <person name="Dunning Hotopp J.C."/>
            <person name="Lin M."/>
            <person name="Madupu R."/>
            <person name="Crabtree J."/>
            <person name="Angiuoli S.V."/>
            <person name="Eisen J.A."/>
            <person name="Seshadri R."/>
            <person name="Ren Q."/>
            <person name="Wu M."/>
            <person name="Utterback T.R."/>
            <person name="Smith S."/>
            <person name="Lewis M."/>
            <person name="Khouri H."/>
            <person name="Zhang C."/>
            <person name="Niu H."/>
            <person name="Lin Q."/>
            <person name="Ohashi N."/>
            <person name="Zhi N."/>
            <person name="Nelson W.C."/>
            <person name="Brinkac L.M."/>
            <person name="Dodson R.J."/>
            <person name="Rosovitz M.J."/>
            <person name="Sundaram J.P."/>
            <person name="Daugherty S.C."/>
            <person name="Davidsen T."/>
            <person name="Durkin A.S."/>
            <person name="Gwinn M.L."/>
            <person name="Haft D.H."/>
            <person name="Selengut J.D."/>
            <person name="Sullivan S.A."/>
            <person name="Zafar N."/>
            <person name="Zhou L."/>
            <person name="Benahmed F."/>
            <person name="Forberger H."/>
            <person name="Halpin R."/>
            <person name="Mulligan S."/>
            <person name="Robinson J."/>
            <person name="White O."/>
            <person name="Rikihisa Y."/>
            <person name="Tettelin H."/>
        </authorList>
    </citation>
    <scope>NUCLEOTIDE SEQUENCE [LARGE SCALE GENOMIC DNA]</scope>
    <source>
        <strain>ATCC CRL-10679 / Arkansas</strain>
    </source>
</reference>
<feature type="chain" id="PRO_0000306598" description="Small ribosomal subunit protein uS13">
    <location>
        <begin position="1"/>
        <end position="123"/>
    </location>
</feature>
<feature type="region of interest" description="Disordered" evidence="2">
    <location>
        <begin position="97"/>
        <end position="123"/>
    </location>
</feature>
<gene>
    <name evidence="1" type="primary">rpsM</name>
    <name type="ordered locus">ECH_0430</name>
</gene>
<organism>
    <name type="scientific">Ehrlichia chaffeensis (strain ATCC CRL-10679 / Arkansas)</name>
    <dbReference type="NCBI Taxonomy" id="205920"/>
    <lineage>
        <taxon>Bacteria</taxon>
        <taxon>Pseudomonadati</taxon>
        <taxon>Pseudomonadota</taxon>
        <taxon>Alphaproteobacteria</taxon>
        <taxon>Rickettsiales</taxon>
        <taxon>Anaplasmataceae</taxon>
        <taxon>Ehrlichia</taxon>
    </lineage>
</organism>
<dbReference type="EMBL" id="CP000236">
    <property type="protein sequence ID" value="ABD45097.1"/>
    <property type="molecule type" value="Genomic_DNA"/>
</dbReference>
<dbReference type="RefSeq" id="WP_011452597.1">
    <property type="nucleotide sequence ID" value="NC_007799.1"/>
</dbReference>
<dbReference type="SMR" id="Q2GH35"/>
<dbReference type="STRING" id="205920.ECH_0430"/>
<dbReference type="KEGG" id="ech:ECH_0430"/>
<dbReference type="eggNOG" id="COG0099">
    <property type="taxonomic scope" value="Bacteria"/>
</dbReference>
<dbReference type="HOGENOM" id="CLU_103849_1_2_5"/>
<dbReference type="OrthoDB" id="9803610at2"/>
<dbReference type="Proteomes" id="UP000008320">
    <property type="component" value="Chromosome"/>
</dbReference>
<dbReference type="GO" id="GO:0005829">
    <property type="term" value="C:cytosol"/>
    <property type="evidence" value="ECO:0007669"/>
    <property type="project" value="TreeGrafter"/>
</dbReference>
<dbReference type="GO" id="GO:0015935">
    <property type="term" value="C:small ribosomal subunit"/>
    <property type="evidence" value="ECO:0007669"/>
    <property type="project" value="TreeGrafter"/>
</dbReference>
<dbReference type="GO" id="GO:0019843">
    <property type="term" value="F:rRNA binding"/>
    <property type="evidence" value="ECO:0007669"/>
    <property type="project" value="UniProtKB-UniRule"/>
</dbReference>
<dbReference type="GO" id="GO:0003735">
    <property type="term" value="F:structural constituent of ribosome"/>
    <property type="evidence" value="ECO:0007669"/>
    <property type="project" value="InterPro"/>
</dbReference>
<dbReference type="GO" id="GO:0000049">
    <property type="term" value="F:tRNA binding"/>
    <property type="evidence" value="ECO:0007669"/>
    <property type="project" value="UniProtKB-UniRule"/>
</dbReference>
<dbReference type="GO" id="GO:0006412">
    <property type="term" value="P:translation"/>
    <property type="evidence" value="ECO:0007669"/>
    <property type="project" value="UniProtKB-UniRule"/>
</dbReference>
<dbReference type="FunFam" id="1.10.8.50:FF:000001">
    <property type="entry name" value="30S ribosomal protein S13"/>
    <property type="match status" value="1"/>
</dbReference>
<dbReference type="FunFam" id="4.10.910.10:FF:000001">
    <property type="entry name" value="30S ribosomal protein S13"/>
    <property type="match status" value="1"/>
</dbReference>
<dbReference type="Gene3D" id="1.10.8.50">
    <property type="match status" value="1"/>
</dbReference>
<dbReference type="Gene3D" id="4.10.910.10">
    <property type="entry name" value="30s ribosomal protein s13, domain 2"/>
    <property type="match status" value="1"/>
</dbReference>
<dbReference type="HAMAP" id="MF_01315">
    <property type="entry name" value="Ribosomal_uS13"/>
    <property type="match status" value="1"/>
</dbReference>
<dbReference type="InterPro" id="IPR027437">
    <property type="entry name" value="Rbsml_uS13_C"/>
</dbReference>
<dbReference type="InterPro" id="IPR001892">
    <property type="entry name" value="Ribosomal_uS13"/>
</dbReference>
<dbReference type="InterPro" id="IPR010979">
    <property type="entry name" value="Ribosomal_uS13-like_H2TH"/>
</dbReference>
<dbReference type="InterPro" id="IPR019980">
    <property type="entry name" value="Ribosomal_uS13_bac-type"/>
</dbReference>
<dbReference type="InterPro" id="IPR018269">
    <property type="entry name" value="Ribosomal_uS13_CS"/>
</dbReference>
<dbReference type="NCBIfam" id="TIGR03631">
    <property type="entry name" value="uS13_bact"/>
    <property type="match status" value="1"/>
</dbReference>
<dbReference type="PANTHER" id="PTHR10871">
    <property type="entry name" value="30S RIBOSOMAL PROTEIN S13/40S RIBOSOMAL PROTEIN S18"/>
    <property type="match status" value="1"/>
</dbReference>
<dbReference type="PANTHER" id="PTHR10871:SF1">
    <property type="entry name" value="SMALL RIBOSOMAL SUBUNIT PROTEIN US13M"/>
    <property type="match status" value="1"/>
</dbReference>
<dbReference type="Pfam" id="PF00416">
    <property type="entry name" value="Ribosomal_S13"/>
    <property type="match status" value="1"/>
</dbReference>
<dbReference type="PIRSF" id="PIRSF002134">
    <property type="entry name" value="Ribosomal_S13"/>
    <property type="match status" value="1"/>
</dbReference>
<dbReference type="SUPFAM" id="SSF46946">
    <property type="entry name" value="S13-like H2TH domain"/>
    <property type="match status" value="1"/>
</dbReference>
<dbReference type="PROSITE" id="PS00646">
    <property type="entry name" value="RIBOSOMAL_S13_1"/>
    <property type="match status" value="1"/>
</dbReference>
<dbReference type="PROSITE" id="PS50159">
    <property type="entry name" value="RIBOSOMAL_S13_2"/>
    <property type="match status" value="1"/>
</dbReference>
<name>RS13_EHRCR</name>
<sequence>MARIAGVNIPTNKRIVIALTYIYGIGLSLANRICEGCNIDHNVRVVNLSDDEIIRIRNFIRENYIVEGDLRKEVSMNIKFLTDIGCYRGLRHRRGLPVRGQRTHTNAKTRKGRSKLPVAAKKK</sequence>
<proteinExistence type="inferred from homology"/>
<protein>
    <recommendedName>
        <fullName evidence="1">Small ribosomal subunit protein uS13</fullName>
    </recommendedName>
    <alternativeName>
        <fullName evidence="3">30S ribosomal protein S13</fullName>
    </alternativeName>
</protein>
<comment type="function">
    <text evidence="1">Located at the top of the head of the 30S subunit, it contacts several helices of the 16S rRNA. In the 70S ribosome it contacts the 23S rRNA (bridge B1a) and protein L5 of the 50S subunit (bridge B1b), connecting the 2 subunits; these bridges are implicated in subunit movement. Contacts the tRNAs in the A and P-sites.</text>
</comment>
<comment type="subunit">
    <text evidence="1">Part of the 30S ribosomal subunit. Forms a loose heterodimer with protein S19. Forms two bridges to the 50S subunit in the 70S ribosome.</text>
</comment>
<comment type="similarity">
    <text evidence="1">Belongs to the universal ribosomal protein uS13 family.</text>
</comment>
<evidence type="ECO:0000255" key="1">
    <source>
        <dbReference type="HAMAP-Rule" id="MF_01315"/>
    </source>
</evidence>
<evidence type="ECO:0000256" key="2">
    <source>
        <dbReference type="SAM" id="MobiDB-lite"/>
    </source>
</evidence>
<evidence type="ECO:0000305" key="3"/>
<keyword id="KW-1185">Reference proteome</keyword>
<keyword id="KW-0687">Ribonucleoprotein</keyword>
<keyword id="KW-0689">Ribosomal protein</keyword>
<keyword id="KW-0694">RNA-binding</keyword>
<keyword id="KW-0699">rRNA-binding</keyword>
<keyword id="KW-0820">tRNA-binding</keyword>